<comment type="function">
    <text evidence="1">Part of the ACTR1A/ACTB filament around which the dynactin complex is built. The dynactin multiprotein complex activates the molecular motor dynein for ultra-processive transport along microtubules.</text>
</comment>
<comment type="subunit">
    <text evidence="1 2">Part of the ACTR1A/ACTB filament around which the dynactin complex is built. The filament contains 8 copies of ACTR1A and 1 ACTB. Interacts with dynein and adapters such as BICD2 (By similarity). Interacts with BCCIP (isoform 2/alpha) (By similarity).</text>
</comment>
<comment type="subcellular location">
    <subcellularLocation>
        <location evidence="3">Cytoplasm</location>
        <location evidence="3">Cytoskeleton</location>
    </subcellularLocation>
    <subcellularLocation>
        <location evidence="2">Cytoplasm</location>
        <location evidence="2">Cytoskeleton</location>
        <location evidence="2">Microtubule organizing center</location>
        <location evidence="2">Centrosome</location>
    </subcellularLocation>
    <subcellularLocation>
        <location evidence="2">Cytoplasm</location>
        <location evidence="2">Cell cortex</location>
    </subcellularLocation>
</comment>
<comment type="similarity">
    <text evidence="4">Belongs to the actin family. ARP1 subfamily.</text>
</comment>
<organism>
    <name type="scientific">Macaca fascicularis</name>
    <name type="common">Crab-eating macaque</name>
    <name type="synonym">Cynomolgus monkey</name>
    <dbReference type="NCBI Taxonomy" id="9541"/>
    <lineage>
        <taxon>Eukaryota</taxon>
        <taxon>Metazoa</taxon>
        <taxon>Chordata</taxon>
        <taxon>Craniata</taxon>
        <taxon>Vertebrata</taxon>
        <taxon>Euteleostomi</taxon>
        <taxon>Mammalia</taxon>
        <taxon>Eutheria</taxon>
        <taxon>Euarchontoglires</taxon>
        <taxon>Primates</taxon>
        <taxon>Haplorrhini</taxon>
        <taxon>Catarrhini</taxon>
        <taxon>Cercopithecidae</taxon>
        <taxon>Cercopithecinae</taxon>
        <taxon>Macaca</taxon>
    </lineage>
</organism>
<reference key="1">
    <citation type="submission" date="2005-06" db="EMBL/GenBank/DDBJ databases">
        <title>DNA sequences of macaque genes expressed in brain or testis and its evolutionary implications.</title>
        <authorList>
            <consortium name="International consortium for macaque cDNA sequencing and analysis"/>
        </authorList>
    </citation>
    <scope>NUCLEOTIDE SEQUENCE [LARGE SCALE MRNA]</scope>
    <source>
        <tissue>Brain cortex</tissue>
        <tissue>Testis</tissue>
    </source>
</reference>
<protein>
    <recommendedName>
        <fullName>Alpha-centractin</fullName>
    </recommendedName>
</protein>
<evidence type="ECO:0000250" key="1">
    <source>
        <dbReference type="UniProtKB" id="F2Z5G5"/>
    </source>
</evidence>
<evidence type="ECO:0000250" key="2">
    <source>
        <dbReference type="UniProtKB" id="P61163"/>
    </source>
</evidence>
<evidence type="ECO:0000250" key="3">
    <source>
        <dbReference type="UniProtKB" id="P85515"/>
    </source>
</evidence>
<evidence type="ECO:0000305" key="4"/>
<proteinExistence type="evidence at transcript level"/>
<name>ACTZ_MACFA</name>
<feature type="chain" id="PRO_0000260758" description="Alpha-centractin">
    <location>
        <begin position="1"/>
        <end position="376"/>
    </location>
</feature>
<feature type="modified residue" description="N-acetylmethionine" evidence="2">
    <location>
        <position position="1"/>
    </location>
</feature>
<feature type="sequence conflict" description="In Ref. 1; BAE01774." evidence="4" ref="1">
    <original>S</original>
    <variation>P</variation>
    <location>
        <position position="140"/>
    </location>
</feature>
<keyword id="KW-0007">Acetylation</keyword>
<keyword id="KW-0067">ATP-binding</keyword>
<keyword id="KW-0963">Cytoplasm</keyword>
<keyword id="KW-0206">Cytoskeleton</keyword>
<keyword id="KW-0547">Nucleotide-binding</keyword>
<keyword id="KW-1185">Reference proteome</keyword>
<gene>
    <name type="primary">ACTR1A</name>
    <name type="ORF">QccE-18914</name>
    <name type="ORF">QtsA-17856</name>
</gene>
<dbReference type="EMBL" id="AB169184">
    <property type="protein sequence ID" value="BAE01276.1"/>
    <property type="molecule type" value="mRNA"/>
</dbReference>
<dbReference type="EMBL" id="AB169693">
    <property type="protein sequence ID" value="BAE01774.1"/>
    <property type="molecule type" value="mRNA"/>
</dbReference>
<dbReference type="RefSeq" id="NP_001272122.1">
    <property type="nucleotide sequence ID" value="NM_001285193.1"/>
</dbReference>
<dbReference type="RefSeq" id="XP_045217402.1">
    <property type="nucleotide sequence ID" value="XM_045361467.2"/>
</dbReference>
<dbReference type="SMR" id="Q4R6J9"/>
<dbReference type="STRING" id="9541.ENSMFAP00000029496"/>
<dbReference type="GeneID" id="101866724"/>
<dbReference type="VEuPathDB" id="HostDB:ENSMFAG00000041926"/>
<dbReference type="eggNOG" id="KOG0676">
    <property type="taxonomic scope" value="Eukaryota"/>
</dbReference>
<dbReference type="OMA" id="CIHSRFM"/>
<dbReference type="Proteomes" id="UP000233100">
    <property type="component" value="Chromosome 9"/>
</dbReference>
<dbReference type="GO" id="GO:0005938">
    <property type="term" value="C:cell cortex"/>
    <property type="evidence" value="ECO:0007669"/>
    <property type="project" value="UniProtKB-SubCell"/>
</dbReference>
<dbReference type="GO" id="GO:0005813">
    <property type="term" value="C:centrosome"/>
    <property type="evidence" value="ECO:0007669"/>
    <property type="project" value="UniProtKB-SubCell"/>
</dbReference>
<dbReference type="GO" id="GO:0005524">
    <property type="term" value="F:ATP binding"/>
    <property type="evidence" value="ECO:0007669"/>
    <property type="project" value="UniProtKB-KW"/>
</dbReference>
<dbReference type="CDD" id="cd10216">
    <property type="entry name" value="ASKHA_NBD_Arp1"/>
    <property type="match status" value="1"/>
</dbReference>
<dbReference type="FunFam" id="3.30.420.40:FF:000188">
    <property type="entry name" value="Actin like 6B"/>
    <property type="match status" value="2"/>
</dbReference>
<dbReference type="FunFam" id="3.90.640.10:FF:000008">
    <property type="entry name" value="alpha-centractin isoform X1"/>
    <property type="match status" value="1"/>
</dbReference>
<dbReference type="Gene3D" id="3.30.420.40">
    <property type="match status" value="2"/>
</dbReference>
<dbReference type="Gene3D" id="3.90.640.10">
    <property type="entry name" value="Actin, Chain A, domain 4"/>
    <property type="match status" value="1"/>
</dbReference>
<dbReference type="InterPro" id="IPR004000">
    <property type="entry name" value="Actin"/>
</dbReference>
<dbReference type="InterPro" id="IPR020902">
    <property type="entry name" value="Actin/actin-like_CS"/>
</dbReference>
<dbReference type="InterPro" id="IPR004001">
    <property type="entry name" value="Actin_CS"/>
</dbReference>
<dbReference type="InterPro" id="IPR043129">
    <property type="entry name" value="ATPase_NBD"/>
</dbReference>
<dbReference type="PANTHER" id="PTHR11937">
    <property type="entry name" value="ACTIN"/>
    <property type="match status" value="1"/>
</dbReference>
<dbReference type="Pfam" id="PF00022">
    <property type="entry name" value="Actin"/>
    <property type="match status" value="1"/>
</dbReference>
<dbReference type="PRINTS" id="PR00190">
    <property type="entry name" value="ACTIN"/>
</dbReference>
<dbReference type="SMART" id="SM00268">
    <property type="entry name" value="ACTIN"/>
    <property type="match status" value="1"/>
</dbReference>
<dbReference type="SUPFAM" id="SSF53067">
    <property type="entry name" value="Actin-like ATPase domain"/>
    <property type="match status" value="2"/>
</dbReference>
<dbReference type="PROSITE" id="PS00432">
    <property type="entry name" value="ACTINS_2"/>
    <property type="match status" value="1"/>
</dbReference>
<dbReference type="PROSITE" id="PS01132">
    <property type="entry name" value="ACTINS_ACT_LIKE"/>
    <property type="match status" value="1"/>
</dbReference>
<sequence length="376" mass="42614">MESYDVIANQPVVIDNGSGVIKAGFAGDQIPKYCFPNYVGRPKHVRVMAGALEGDIFIGPKAEEHRGLLSIRYPMEHGIVKDWNDMERIWQYVYSKDQLQTFSEEHPVLLTEAPLNPRKNRERAAEVFFETFNVPALFISMQAVLSLYATGRTTGVVLDSGDGVTHAVPIYEGFAMPHSIMRIDIAGRDVSRFLRLYLRKEGYDFHSSSEFEIVKAIKERACYLSINPQKDETLETEKAQYYLPDGSTIEIGPSRFRAPELLFRPDLIGEESEGIHEVLVFAIQKSDMDLRRTLFSNIVLSGGSTLFKGFGDRLLSEVKKLAPKDVKIRISAPQERLYSTWIGGSILASLDTFKKMWVSKKEYEEDGARSIHRKTF</sequence>
<accession>Q4R6J9</accession>
<accession>Q4R551</accession>